<gene>
    <name evidence="5" type="primary">aes1</name>
    <name evidence="4" type="synonym">MtAE</name>
</gene>
<proteinExistence type="evidence at protein level"/>
<comment type="function">
    <text evidence="3">Acetyl esterase that acts as an exo-deacetylase (PubMed:24140638). Liberates acetic acid from xylo-oligomers (PubMed:24140638).</text>
</comment>
<comment type="catalytic activity">
    <reaction evidence="3">
        <text>an acetyl ester + H2O = an aliphatic alcohol + acetate + H(+)</text>
        <dbReference type="Rhea" id="RHEA:12957"/>
        <dbReference type="ChEBI" id="CHEBI:2571"/>
        <dbReference type="ChEBI" id="CHEBI:15377"/>
        <dbReference type="ChEBI" id="CHEBI:15378"/>
        <dbReference type="ChEBI" id="CHEBI:30089"/>
        <dbReference type="ChEBI" id="CHEBI:47622"/>
        <dbReference type="EC" id="3.1.1.6"/>
    </reaction>
</comment>
<comment type="subcellular location">
    <subcellularLocation>
        <location evidence="5">Secreted</location>
    </subcellularLocation>
</comment>
<comment type="similarity">
    <text evidence="5">Belongs to the carbohydrate esterase CE16 family.</text>
</comment>
<feature type="signal peptide" evidence="1">
    <location>
        <begin position="1"/>
        <end position="21"/>
    </location>
</feature>
<feature type="chain" id="PRO_5004588075" description="Acetylesterase">
    <location>
        <begin position="22"/>
        <end position="302"/>
    </location>
</feature>
<feature type="glycosylation site" description="N-linked (GlcNAc...) asparagine" evidence="2">
    <location>
        <position position="84"/>
    </location>
</feature>
<feature type="glycosylation site" description="N-linked (GlcNAc...) asparagine" evidence="2">
    <location>
        <position position="101"/>
    </location>
</feature>
<name>AES1_THETO</name>
<reference key="1">
    <citation type="journal article" date="2013" name="J. Biotechnol.">
        <title>Distinct roles of carbohydrate esterase family CE16 acetyl esterases and polymer-acting acetyl xylan esterases in xylan deacetylation.</title>
        <authorList>
            <person name="Koutaniemi S."/>
            <person name="van Gool M.P."/>
            <person name="Juvonen M."/>
            <person name="Jokela J."/>
            <person name="Hinz S.W."/>
            <person name="Schols H.A."/>
            <person name="Tenkanen M."/>
        </authorList>
    </citation>
    <scope>NUCLEOTIDE SEQUENCE [GENOMIC DNA]</scope>
    <scope>FUNCTION</scope>
    <scope>CATALYTIC ACTIVITY</scope>
    <source>
        <strain>VKM F-3500-D</strain>
    </source>
</reference>
<organism>
    <name type="scientific">Thermothelomyces thermophilus</name>
    <name type="common">Myceliophthora thermophila</name>
    <dbReference type="NCBI Taxonomy" id="78579"/>
    <lineage>
        <taxon>Eukaryota</taxon>
        <taxon>Fungi</taxon>
        <taxon>Dikarya</taxon>
        <taxon>Ascomycota</taxon>
        <taxon>Pezizomycotina</taxon>
        <taxon>Sordariomycetes</taxon>
        <taxon>Sordariomycetidae</taxon>
        <taxon>Sordariales</taxon>
        <taxon>Chaetomiaceae</taxon>
        <taxon>Thermothelomyces</taxon>
    </lineage>
</organism>
<dbReference type="EC" id="3.1.1.6" evidence="3"/>
<dbReference type="EMBL" id="KF170220">
    <property type="protein sequence ID" value="AGW01024.1"/>
    <property type="molecule type" value="Genomic_DNA"/>
</dbReference>
<dbReference type="SMR" id="T2FKR1"/>
<dbReference type="GlyCosmos" id="T2FKR1">
    <property type="glycosylation" value="2 sites, No reported glycans"/>
</dbReference>
<dbReference type="VEuPathDB" id="FungiDB:MYCTH_84133"/>
<dbReference type="GO" id="GO:0005576">
    <property type="term" value="C:extracellular region"/>
    <property type="evidence" value="ECO:0007669"/>
    <property type="project" value="UniProtKB-SubCell"/>
</dbReference>
<dbReference type="GO" id="GO:0008126">
    <property type="term" value="F:acetylesterase activity"/>
    <property type="evidence" value="ECO:0007669"/>
    <property type="project" value="UniProtKB-EC"/>
</dbReference>
<dbReference type="CDD" id="cd01846">
    <property type="entry name" value="fatty_acyltransferase_like"/>
    <property type="match status" value="1"/>
</dbReference>
<dbReference type="Gene3D" id="3.40.50.1110">
    <property type="entry name" value="SGNH hydrolase"/>
    <property type="match status" value="1"/>
</dbReference>
<dbReference type="InterPro" id="IPR001087">
    <property type="entry name" value="GDSL"/>
</dbReference>
<dbReference type="InterPro" id="IPR050592">
    <property type="entry name" value="GDSL_lipolytic_enzyme"/>
</dbReference>
<dbReference type="InterPro" id="IPR036514">
    <property type="entry name" value="SGNH_hydro_sf"/>
</dbReference>
<dbReference type="PANTHER" id="PTHR45642">
    <property type="entry name" value="GDSL ESTERASE/LIPASE EXL3"/>
    <property type="match status" value="1"/>
</dbReference>
<dbReference type="PANTHER" id="PTHR45642:SF139">
    <property type="entry name" value="SGNH HYDROLASE-TYPE ESTERASE DOMAIN-CONTAINING PROTEIN"/>
    <property type="match status" value="1"/>
</dbReference>
<dbReference type="Pfam" id="PF00657">
    <property type="entry name" value="Lipase_GDSL"/>
    <property type="match status" value="1"/>
</dbReference>
<dbReference type="SUPFAM" id="SSF52266">
    <property type="entry name" value="SGNH hydrolase"/>
    <property type="match status" value="1"/>
</dbReference>
<sequence length="302" mass="32473">MGRFLTTTALALLATGGAATARPIRACDVSTKYLITFGDSYSQTGFDVTGTKPSASNPLGNPLLPGWTASGGLNWVGFLVSEFNTSTTLSYNFAYGGATTNATIVPPYQPTVLSFIDQVAQFSGSIARKPDYAPWNADNALFGVWIGVNDVGNVWWDPNYDSLLEQIMESYFGQLQILYDAGARNFVLLSVPPIQRTPAVLLNNSPENQKAEALAVDKYNEALAANLEAFTDKNGGITAKIVDTGVPFNTALDNPTDYGAPDATCYNSDGKSCLWFNDYHPGIEINRLVAQAVADAWKGSFF</sequence>
<evidence type="ECO:0000255" key="1"/>
<evidence type="ECO:0000255" key="2">
    <source>
        <dbReference type="PROSITE-ProRule" id="PRU00498"/>
    </source>
</evidence>
<evidence type="ECO:0000269" key="3">
    <source>
    </source>
</evidence>
<evidence type="ECO:0000303" key="4">
    <source>
    </source>
</evidence>
<evidence type="ECO:0000305" key="5"/>
<keyword id="KW-0325">Glycoprotein</keyword>
<keyword id="KW-0378">Hydrolase</keyword>
<keyword id="KW-0964">Secreted</keyword>
<keyword id="KW-0732">Signal</keyword>
<accession>T2FKR1</accession>
<protein>
    <recommendedName>
        <fullName evidence="4">Acetylesterase</fullName>
        <ecNumber evidence="3">3.1.1.6</ecNumber>
    </recommendedName>
    <alternativeName>
        <fullName evidence="4">Carbohydrate esterase family 16 protein</fullName>
    </alternativeName>
</protein>